<comment type="function">
    <text evidence="1">Involved in mRNA degradation. Catalyzes the phosphorolysis of single-stranded polyribonucleotides processively in the 3'- to 5'-direction.</text>
</comment>
<comment type="catalytic activity">
    <reaction evidence="1">
        <text>RNA(n+1) + phosphate = RNA(n) + a ribonucleoside 5'-diphosphate</text>
        <dbReference type="Rhea" id="RHEA:22096"/>
        <dbReference type="Rhea" id="RHEA-COMP:14527"/>
        <dbReference type="Rhea" id="RHEA-COMP:17342"/>
        <dbReference type="ChEBI" id="CHEBI:43474"/>
        <dbReference type="ChEBI" id="CHEBI:57930"/>
        <dbReference type="ChEBI" id="CHEBI:140395"/>
        <dbReference type="EC" id="2.7.7.8"/>
    </reaction>
</comment>
<comment type="cofactor">
    <cofactor evidence="1">
        <name>Mg(2+)</name>
        <dbReference type="ChEBI" id="CHEBI:18420"/>
    </cofactor>
</comment>
<comment type="subcellular location">
    <subcellularLocation>
        <location evidence="1">Cytoplasm</location>
    </subcellularLocation>
</comment>
<comment type="similarity">
    <text evidence="1">Belongs to the polyribonucleotide nucleotidyltransferase family.</text>
</comment>
<gene>
    <name evidence="1" type="primary">pnp</name>
    <name type="ordered locus">PCC8801_0258</name>
</gene>
<evidence type="ECO:0000255" key="1">
    <source>
        <dbReference type="HAMAP-Rule" id="MF_01595"/>
    </source>
</evidence>
<protein>
    <recommendedName>
        <fullName evidence="1">Polyribonucleotide nucleotidyltransferase</fullName>
        <ecNumber evidence="1">2.7.7.8</ecNumber>
    </recommendedName>
    <alternativeName>
        <fullName evidence="1">Polynucleotide phosphorylase</fullName>
        <shortName evidence="1">PNPase</shortName>
    </alternativeName>
</protein>
<name>PNP_RIPO1</name>
<organism>
    <name type="scientific">Rippkaea orientalis (strain PCC 8801 / RF-1)</name>
    <name type="common">Cyanothece sp. (strain PCC 8801)</name>
    <dbReference type="NCBI Taxonomy" id="41431"/>
    <lineage>
        <taxon>Bacteria</taxon>
        <taxon>Bacillati</taxon>
        <taxon>Cyanobacteriota</taxon>
        <taxon>Cyanophyceae</taxon>
        <taxon>Oscillatoriophycideae</taxon>
        <taxon>Chroococcales</taxon>
        <taxon>Aphanothecaceae</taxon>
        <taxon>Rippkaea</taxon>
        <taxon>Rippkaea orientalis</taxon>
    </lineage>
</organism>
<proteinExistence type="inferred from homology"/>
<reference key="1">
    <citation type="journal article" date="2011" name="MBio">
        <title>Novel metabolic attributes of the genus Cyanothece, comprising a group of unicellular nitrogen-fixing Cyanobacteria.</title>
        <authorList>
            <person name="Bandyopadhyay A."/>
            <person name="Elvitigala T."/>
            <person name="Welsh E."/>
            <person name="Stockel J."/>
            <person name="Liberton M."/>
            <person name="Min H."/>
            <person name="Sherman L.A."/>
            <person name="Pakrasi H.B."/>
        </authorList>
    </citation>
    <scope>NUCLEOTIDE SEQUENCE [LARGE SCALE GENOMIC DNA]</scope>
    <source>
        <strain>PCC 8801 / RF-1</strain>
    </source>
</reference>
<accession>B7K339</accession>
<sequence>MQEFDKSISFDGRDIRLKLGLLAPQAGGSVLIQSGDTAVLVTATRATGREGIDFLPLTVDYEERLYAAGRIPGGFLRREGRPPEKAILISRLIDRPLRPLFPQWLRDDIQIIATTLSMDEEVPPDVLAVTGASIAVIAARIPFFGPMAAVRVGLIGDDFIINPTYREIEIGDLDLVVAGSPDGVVMVEAGANQLPEQDIIEAIDFGYEAVRDLIQAQRDVMEALDIPLVIGEPPAVNEVLQSFISDRASESIKKVLMQYNLDKNARDEQLDEIKETAITNAIAELPEEDPVKVAATEEPKAVSNLYKDLTKKLMRSQIITDGVRVDGRKLDEVRPISSRVCLLPRRVHGSALFARGLTQVLSLATLGTPGDAQDLADDLHPEDEKRYLHHYNFPPFSVGETKPLRSPGRREIGHGALAERAITPILPPQEEFPYVIRVVSEVLSSNGSTSMGSVCGSTLALMDAGVPITKPVSGAAMGLIKEGDEVRILTDIQGIEDFLGDMDFKVAGTDSGITALQMDMKITGLSMEIVAKAIEQALPARLHILDKMMETLSTPRKNLSPYAPRLLTMKIDPEQIGLVIGPGGKTIKGITEQTGSKIDIADDGTVTIAALEAEKAEKAKQIIYNMTRKLNEGEVYMGRVTRIIQIGAFVEVLPGKEGMIHISQLAEGRVGKVEDEVAVGDEVIVKVREIDAKGRLNLTRLGIHPDEAAAARKAVAPV</sequence>
<keyword id="KW-0963">Cytoplasm</keyword>
<keyword id="KW-0460">Magnesium</keyword>
<keyword id="KW-0479">Metal-binding</keyword>
<keyword id="KW-0548">Nucleotidyltransferase</keyword>
<keyword id="KW-1185">Reference proteome</keyword>
<keyword id="KW-0694">RNA-binding</keyword>
<keyword id="KW-0808">Transferase</keyword>
<feature type="chain" id="PRO_1000147913" description="Polyribonucleotide nucleotidyltransferase">
    <location>
        <begin position="1"/>
        <end position="718"/>
    </location>
</feature>
<feature type="domain" description="KH" evidence="1">
    <location>
        <begin position="564"/>
        <end position="623"/>
    </location>
</feature>
<feature type="domain" description="S1 motif" evidence="1">
    <location>
        <begin position="633"/>
        <end position="701"/>
    </location>
</feature>
<feature type="binding site" evidence="1">
    <location>
        <position position="497"/>
    </location>
    <ligand>
        <name>Mg(2+)</name>
        <dbReference type="ChEBI" id="CHEBI:18420"/>
    </ligand>
</feature>
<feature type="binding site" evidence="1">
    <location>
        <position position="503"/>
    </location>
    <ligand>
        <name>Mg(2+)</name>
        <dbReference type="ChEBI" id="CHEBI:18420"/>
    </ligand>
</feature>
<dbReference type="EC" id="2.7.7.8" evidence="1"/>
<dbReference type="EMBL" id="CP001287">
    <property type="protein sequence ID" value="ACK64359.1"/>
    <property type="molecule type" value="Genomic_DNA"/>
</dbReference>
<dbReference type="RefSeq" id="WP_012593636.1">
    <property type="nucleotide sequence ID" value="NC_011726.1"/>
</dbReference>
<dbReference type="SMR" id="B7K339"/>
<dbReference type="STRING" id="41431.PCC8801_0258"/>
<dbReference type="KEGG" id="cyp:PCC8801_0258"/>
<dbReference type="eggNOG" id="COG1185">
    <property type="taxonomic scope" value="Bacteria"/>
</dbReference>
<dbReference type="HOGENOM" id="CLU_004217_2_2_3"/>
<dbReference type="OrthoDB" id="9804305at2"/>
<dbReference type="Proteomes" id="UP000008204">
    <property type="component" value="Chromosome"/>
</dbReference>
<dbReference type="GO" id="GO:0005829">
    <property type="term" value="C:cytosol"/>
    <property type="evidence" value="ECO:0007669"/>
    <property type="project" value="TreeGrafter"/>
</dbReference>
<dbReference type="GO" id="GO:0000175">
    <property type="term" value="F:3'-5'-RNA exonuclease activity"/>
    <property type="evidence" value="ECO:0007669"/>
    <property type="project" value="TreeGrafter"/>
</dbReference>
<dbReference type="GO" id="GO:0000287">
    <property type="term" value="F:magnesium ion binding"/>
    <property type="evidence" value="ECO:0007669"/>
    <property type="project" value="UniProtKB-UniRule"/>
</dbReference>
<dbReference type="GO" id="GO:0004654">
    <property type="term" value="F:polyribonucleotide nucleotidyltransferase activity"/>
    <property type="evidence" value="ECO:0007669"/>
    <property type="project" value="UniProtKB-UniRule"/>
</dbReference>
<dbReference type="GO" id="GO:0003723">
    <property type="term" value="F:RNA binding"/>
    <property type="evidence" value="ECO:0007669"/>
    <property type="project" value="UniProtKB-UniRule"/>
</dbReference>
<dbReference type="GO" id="GO:0006402">
    <property type="term" value="P:mRNA catabolic process"/>
    <property type="evidence" value="ECO:0007669"/>
    <property type="project" value="UniProtKB-UniRule"/>
</dbReference>
<dbReference type="GO" id="GO:0006396">
    <property type="term" value="P:RNA processing"/>
    <property type="evidence" value="ECO:0007669"/>
    <property type="project" value="InterPro"/>
</dbReference>
<dbReference type="CDD" id="cd02393">
    <property type="entry name" value="KH-I_PNPase"/>
    <property type="match status" value="1"/>
</dbReference>
<dbReference type="CDD" id="cd11363">
    <property type="entry name" value="RNase_PH_PNPase_1"/>
    <property type="match status" value="1"/>
</dbReference>
<dbReference type="CDD" id="cd11364">
    <property type="entry name" value="RNase_PH_PNPase_2"/>
    <property type="match status" value="1"/>
</dbReference>
<dbReference type="CDD" id="cd04472">
    <property type="entry name" value="S1_PNPase"/>
    <property type="match status" value="1"/>
</dbReference>
<dbReference type="FunFam" id="3.30.1370.10:FF:000001">
    <property type="entry name" value="Polyribonucleotide nucleotidyltransferase"/>
    <property type="match status" value="1"/>
</dbReference>
<dbReference type="FunFam" id="3.30.230.70:FF:000001">
    <property type="entry name" value="Polyribonucleotide nucleotidyltransferase"/>
    <property type="match status" value="1"/>
</dbReference>
<dbReference type="FunFam" id="3.30.230.70:FF:000002">
    <property type="entry name" value="Polyribonucleotide nucleotidyltransferase"/>
    <property type="match status" value="1"/>
</dbReference>
<dbReference type="Gene3D" id="3.30.230.70">
    <property type="entry name" value="GHMP Kinase, N-terminal domain"/>
    <property type="match status" value="2"/>
</dbReference>
<dbReference type="Gene3D" id="3.30.1370.10">
    <property type="entry name" value="K Homology domain, type 1"/>
    <property type="match status" value="1"/>
</dbReference>
<dbReference type="Gene3D" id="2.40.50.140">
    <property type="entry name" value="Nucleic acid-binding proteins"/>
    <property type="match status" value="1"/>
</dbReference>
<dbReference type="HAMAP" id="MF_01595">
    <property type="entry name" value="PNPase"/>
    <property type="match status" value="1"/>
</dbReference>
<dbReference type="InterPro" id="IPR001247">
    <property type="entry name" value="ExoRNase_PH_dom1"/>
</dbReference>
<dbReference type="InterPro" id="IPR015847">
    <property type="entry name" value="ExoRNase_PH_dom2"/>
</dbReference>
<dbReference type="InterPro" id="IPR036345">
    <property type="entry name" value="ExoRNase_PH_dom2_sf"/>
</dbReference>
<dbReference type="InterPro" id="IPR004087">
    <property type="entry name" value="KH_dom"/>
</dbReference>
<dbReference type="InterPro" id="IPR004088">
    <property type="entry name" value="KH_dom_type_1"/>
</dbReference>
<dbReference type="InterPro" id="IPR036612">
    <property type="entry name" value="KH_dom_type_1_sf"/>
</dbReference>
<dbReference type="InterPro" id="IPR012340">
    <property type="entry name" value="NA-bd_OB-fold"/>
</dbReference>
<dbReference type="InterPro" id="IPR012162">
    <property type="entry name" value="PNPase"/>
</dbReference>
<dbReference type="InterPro" id="IPR027408">
    <property type="entry name" value="PNPase/RNase_PH_dom_sf"/>
</dbReference>
<dbReference type="InterPro" id="IPR015848">
    <property type="entry name" value="PNPase_PH_RNA-bd_bac/org-type"/>
</dbReference>
<dbReference type="InterPro" id="IPR020568">
    <property type="entry name" value="Ribosomal_Su5_D2-typ_SF"/>
</dbReference>
<dbReference type="InterPro" id="IPR003029">
    <property type="entry name" value="S1_domain"/>
</dbReference>
<dbReference type="NCBIfam" id="TIGR03591">
    <property type="entry name" value="polynuc_phos"/>
    <property type="match status" value="1"/>
</dbReference>
<dbReference type="NCBIfam" id="NF008805">
    <property type="entry name" value="PRK11824.1"/>
    <property type="match status" value="1"/>
</dbReference>
<dbReference type="PANTHER" id="PTHR11252">
    <property type="entry name" value="POLYRIBONUCLEOTIDE NUCLEOTIDYLTRANSFERASE"/>
    <property type="match status" value="1"/>
</dbReference>
<dbReference type="PANTHER" id="PTHR11252:SF0">
    <property type="entry name" value="POLYRIBONUCLEOTIDE NUCLEOTIDYLTRANSFERASE 1, MITOCHONDRIAL"/>
    <property type="match status" value="1"/>
</dbReference>
<dbReference type="Pfam" id="PF00013">
    <property type="entry name" value="KH_1"/>
    <property type="match status" value="1"/>
</dbReference>
<dbReference type="Pfam" id="PF03726">
    <property type="entry name" value="PNPase"/>
    <property type="match status" value="1"/>
</dbReference>
<dbReference type="Pfam" id="PF01138">
    <property type="entry name" value="RNase_PH"/>
    <property type="match status" value="2"/>
</dbReference>
<dbReference type="Pfam" id="PF03725">
    <property type="entry name" value="RNase_PH_C"/>
    <property type="match status" value="2"/>
</dbReference>
<dbReference type="Pfam" id="PF00575">
    <property type="entry name" value="S1"/>
    <property type="match status" value="1"/>
</dbReference>
<dbReference type="PIRSF" id="PIRSF005499">
    <property type="entry name" value="PNPase"/>
    <property type="match status" value="1"/>
</dbReference>
<dbReference type="SMART" id="SM00322">
    <property type="entry name" value="KH"/>
    <property type="match status" value="1"/>
</dbReference>
<dbReference type="SMART" id="SM00316">
    <property type="entry name" value="S1"/>
    <property type="match status" value="1"/>
</dbReference>
<dbReference type="SUPFAM" id="SSF54791">
    <property type="entry name" value="Eukaryotic type KH-domain (KH-domain type I)"/>
    <property type="match status" value="1"/>
</dbReference>
<dbReference type="SUPFAM" id="SSF50249">
    <property type="entry name" value="Nucleic acid-binding proteins"/>
    <property type="match status" value="1"/>
</dbReference>
<dbReference type="SUPFAM" id="SSF55666">
    <property type="entry name" value="Ribonuclease PH domain 2-like"/>
    <property type="match status" value="2"/>
</dbReference>
<dbReference type="SUPFAM" id="SSF54211">
    <property type="entry name" value="Ribosomal protein S5 domain 2-like"/>
    <property type="match status" value="2"/>
</dbReference>
<dbReference type="PROSITE" id="PS50084">
    <property type="entry name" value="KH_TYPE_1"/>
    <property type="match status" value="1"/>
</dbReference>
<dbReference type="PROSITE" id="PS50126">
    <property type="entry name" value="S1"/>
    <property type="match status" value="1"/>
</dbReference>